<organism>
    <name type="scientific">Bos taurus</name>
    <name type="common">Bovine</name>
    <dbReference type="NCBI Taxonomy" id="9913"/>
    <lineage>
        <taxon>Eukaryota</taxon>
        <taxon>Metazoa</taxon>
        <taxon>Chordata</taxon>
        <taxon>Craniata</taxon>
        <taxon>Vertebrata</taxon>
        <taxon>Euteleostomi</taxon>
        <taxon>Mammalia</taxon>
        <taxon>Eutheria</taxon>
        <taxon>Laurasiatheria</taxon>
        <taxon>Artiodactyla</taxon>
        <taxon>Ruminantia</taxon>
        <taxon>Pecora</taxon>
        <taxon>Bovidae</taxon>
        <taxon>Bovinae</taxon>
        <taxon>Bos</taxon>
    </lineage>
</organism>
<comment type="function">
    <text evidence="3 4">Catalyzes the conversion of dihydroorotate to orotate with quinone as electron acceptor. Required for UMP biosynthesis via de novo pathway.</text>
</comment>
<comment type="catalytic activity">
    <reaction evidence="4">
        <text>(S)-dihydroorotate + a quinone = orotate + a quinol</text>
        <dbReference type="Rhea" id="RHEA:30187"/>
        <dbReference type="ChEBI" id="CHEBI:24646"/>
        <dbReference type="ChEBI" id="CHEBI:30839"/>
        <dbReference type="ChEBI" id="CHEBI:30864"/>
        <dbReference type="ChEBI" id="CHEBI:132124"/>
        <dbReference type="EC" id="1.3.5.2"/>
    </reaction>
</comment>
<comment type="cofactor">
    <cofactor evidence="2">
        <name>FMN</name>
        <dbReference type="ChEBI" id="CHEBI:58210"/>
    </cofactor>
    <text evidence="2">Binds 1 FMN per subunit.</text>
</comment>
<comment type="biophysicochemical properties">
    <kinetics>
        <KM evidence="3 4">9.2 uM for (S)-dihydroorotate</KM>
        <KM evidence="3 4">13.6 uM for benzyl-(S)-dihydroorotate</KM>
        <KM evidence="3 4">19.4 uM for methyl-(S)-dihydroorotate</KM>
        <KM evidence="3 4">10.8 uM for quinone Q(6)</KM>
        <KM evidence="3 4">13.2 uM for quinone Q(7)</KM>
        <Vmax evidence="3 4">72.0 umol/min/mg enzyme toward (S)-dihydroorotate</Vmax>
        <Vmax evidence="3 4">80.0 umol/min/mg enzyme toward benzyl-(S)-dihydroorotate</Vmax>
        <Vmax evidence="3 4">63.0 umol/min/mg enzyme toward methyl-(S)-dihydroorotate</Vmax>
        <Vmax evidence="3 4">82.0 umol/min/mg enzyme toward quinone Q(6)</Vmax>
        <Vmax evidence="3 4">88.0 umol/min/mg enzyme toward quinone Q(7)</Vmax>
    </kinetics>
    <phDependence>
        <text evidence="3 4">Optimum pH is 8.0.</text>
    </phDependence>
</comment>
<comment type="pathway">
    <text>Pyrimidine metabolism; UMP biosynthesis via de novo pathway; orotate from (S)-dihydroorotate (quinone route): step 1/1.</text>
</comment>
<comment type="subunit">
    <text evidence="2">Monomer.</text>
</comment>
<comment type="subcellular location">
    <subcellularLocation>
        <location evidence="2">Mitochondrion inner membrane</location>
        <topology evidence="2">Single-pass membrane protein</topology>
    </subcellularLocation>
</comment>
<comment type="PTM">
    <text evidence="1">The uncleaved transit peptide is required for mitochondrial targeting and proper membrane integration.</text>
</comment>
<comment type="similarity">
    <text evidence="5">Belongs to the dihydroorotate dehydrogenase family. Type 2 subfamily.</text>
</comment>
<dbReference type="EC" id="1.3.5.2" evidence="3 4"/>
<dbReference type="EMBL" id="BT020807">
    <property type="protein sequence ID" value="AAX08824.1"/>
    <property type="molecule type" value="mRNA"/>
</dbReference>
<dbReference type="EMBL" id="BC120337">
    <property type="protein sequence ID" value="AAI20338.1"/>
    <property type="molecule type" value="mRNA"/>
</dbReference>
<dbReference type="RefSeq" id="NP_001015650.1">
    <property type="nucleotide sequence ID" value="NM_001015650.1"/>
</dbReference>
<dbReference type="SMR" id="Q5E9W3"/>
<dbReference type="FunCoup" id="Q5E9W3">
    <property type="interactions" value="1434"/>
</dbReference>
<dbReference type="STRING" id="9913.ENSBTAP00000026495"/>
<dbReference type="PaxDb" id="9913-ENSBTAP00000055859"/>
<dbReference type="GeneID" id="533873"/>
<dbReference type="KEGG" id="bta:533873"/>
<dbReference type="CTD" id="1723"/>
<dbReference type="eggNOG" id="KOG1436">
    <property type="taxonomic scope" value="Eukaryota"/>
</dbReference>
<dbReference type="InParanoid" id="Q5E9W3"/>
<dbReference type="OrthoDB" id="14784at2759"/>
<dbReference type="SABIO-RK" id="Q5E9W3"/>
<dbReference type="UniPathway" id="UPA00070">
    <property type="reaction ID" value="UER00946"/>
</dbReference>
<dbReference type="Proteomes" id="UP000009136">
    <property type="component" value="Unplaced"/>
</dbReference>
<dbReference type="GO" id="GO:0005743">
    <property type="term" value="C:mitochondrial inner membrane"/>
    <property type="evidence" value="ECO:0000318"/>
    <property type="project" value="GO_Central"/>
</dbReference>
<dbReference type="GO" id="GO:0106430">
    <property type="term" value="F:dihydroorotate dehydrogenase (quinone) activity"/>
    <property type="evidence" value="ECO:0007669"/>
    <property type="project" value="UniProtKB-EC"/>
</dbReference>
<dbReference type="GO" id="GO:0004152">
    <property type="term" value="F:dihydroorotate dehydrogenase activity"/>
    <property type="evidence" value="ECO:0000318"/>
    <property type="project" value="GO_Central"/>
</dbReference>
<dbReference type="GO" id="GO:0006207">
    <property type="term" value="P:'de novo' pyrimidine nucleobase biosynthetic process"/>
    <property type="evidence" value="ECO:0000318"/>
    <property type="project" value="GO_Central"/>
</dbReference>
<dbReference type="GO" id="GO:0044205">
    <property type="term" value="P:'de novo' UMP biosynthetic process"/>
    <property type="evidence" value="ECO:0007669"/>
    <property type="project" value="UniProtKB-UniPathway"/>
</dbReference>
<dbReference type="GO" id="GO:0009220">
    <property type="term" value="P:pyrimidine ribonucleotide biosynthetic process"/>
    <property type="evidence" value="ECO:0000318"/>
    <property type="project" value="GO_Central"/>
</dbReference>
<dbReference type="CDD" id="cd04738">
    <property type="entry name" value="DHOD_2_like"/>
    <property type="match status" value="1"/>
</dbReference>
<dbReference type="FunFam" id="3.20.20.70:FF:000066">
    <property type="entry name" value="Dihydroorotate dehydrogenase (quinone), mitochondrial"/>
    <property type="match status" value="1"/>
</dbReference>
<dbReference type="Gene3D" id="3.20.20.70">
    <property type="entry name" value="Aldolase class I"/>
    <property type="match status" value="1"/>
</dbReference>
<dbReference type="HAMAP" id="MF_00225">
    <property type="entry name" value="DHO_dh_type2"/>
    <property type="match status" value="1"/>
</dbReference>
<dbReference type="InterPro" id="IPR013785">
    <property type="entry name" value="Aldolase_TIM"/>
</dbReference>
<dbReference type="InterPro" id="IPR050074">
    <property type="entry name" value="DHO_dehydrogenase"/>
</dbReference>
<dbReference type="InterPro" id="IPR005719">
    <property type="entry name" value="Dihydroorotate_DH_2"/>
</dbReference>
<dbReference type="InterPro" id="IPR005720">
    <property type="entry name" value="Dihydroorotate_DH_cat"/>
</dbReference>
<dbReference type="InterPro" id="IPR001295">
    <property type="entry name" value="Dihydroorotate_DH_CS"/>
</dbReference>
<dbReference type="NCBIfam" id="NF003645">
    <property type="entry name" value="PRK05286.1-2"/>
    <property type="match status" value="1"/>
</dbReference>
<dbReference type="NCBIfam" id="NF003652">
    <property type="entry name" value="PRK05286.2-5"/>
    <property type="match status" value="1"/>
</dbReference>
<dbReference type="NCBIfam" id="TIGR01036">
    <property type="entry name" value="pyrD_sub2"/>
    <property type="match status" value="1"/>
</dbReference>
<dbReference type="PANTHER" id="PTHR48109:SF4">
    <property type="entry name" value="DIHYDROOROTATE DEHYDROGENASE (QUINONE), MITOCHONDRIAL"/>
    <property type="match status" value="1"/>
</dbReference>
<dbReference type="PANTHER" id="PTHR48109">
    <property type="entry name" value="DIHYDROOROTATE DEHYDROGENASE (QUINONE), MITOCHONDRIAL-RELATED"/>
    <property type="match status" value="1"/>
</dbReference>
<dbReference type="Pfam" id="PF01180">
    <property type="entry name" value="DHO_dh"/>
    <property type="match status" value="1"/>
</dbReference>
<dbReference type="SUPFAM" id="SSF51395">
    <property type="entry name" value="FMN-linked oxidoreductases"/>
    <property type="match status" value="1"/>
</dbReference>
<dbReference type="PROSITE" id="PS00911">
    <property type="entry name" value="DHODEHASE_1"/>
    <property type="match status" value="1"/>
</dbReference>
<dbReference type="PROSITE" id="PS00912">
    <property type="entry name" value="DHODEHASE_2"/>
    <property type="match status" value="1"/>
</dbReference>
<sequence length="395" mass="42776">MAWRQLKKRAQDAMVILGGGGLLFASYLTATGDEHFYAELLMPSLQRLLDPETAHRLAVRFTSLGLLPRTTFQDSDMLEVRVLGHKFRNPVGIAAGFDKHGEAVDGLYKMGFGFVEIGSVTPEPQEGNPRPRVFRLPEDQAIINRYGFNSHGLSVVEHRLRARQQTQARLTEDGLPLGINLGKNKTSVDAASDYAEGVRVLGPLADYLVVNVSSPNTAGLRSLQGKAELRRLLTKVLQERDALKVAHKPAVLVKIAPDLTAQDKEDIASVVRELGIDGLIVTNSTVSRPASLQGALRSEPGGLSGKPLRDLSTQTIREMYALTQGRVPIVGVGGVSSGQDALEKIRAGASLVQLYTALTYRGPPVVGGVKRELEALLKEQGFARVTDAIGADHRR</sequence>
<name>PYRD_BOVIN</name>
<gene>
    <name type="primary">DHODH</name>
</gene>
<proteinExistence type="evidence at protein level"/>
<accession>Q5E9W3</accession>
<accession>Q0P590</accession>
<evidence type="ECO:0000250" key="1"/>
<evidence type="ECO:0000250" key="2">
    <source>
        <dbReference type="UniProtKB" id="Q02127"/>
    </source>
</evidence>
<evidence type="ECO:0000269" key="3">
    <source>
    </source>
</evidence>
<evidence type="ECO:0000269" key="4">
    <source>
    </source>
</evidence>
<evidence type="ECO:0000305" key="5"/>
<protein>
    <recommendedName>
        <fullName>Dihydroorotate dehydrogenase (quinone), mitochondrial</fullName>
        <shortName>DHOdehase</shortName>
        <ecNumber evidence="3 4">1.3.5.2</ecNumber>
    </recommendedName>
    <alternativeName>
        <fullName>Dihydroorotate oxidase</fullName>
    </alternativeName>
</protein>
<reference key="1">
    <citation type="journal article" date="2005" name="BMC Genomics">
        <title>Characterization of 954 bovine full-CDS cDNA sequences.</title>
        <authorList>
            <person name="Harhay G.P."/>
            <person name="Sonstegard T.S."/>
            <person name="Keele J.W."/>
            <person name="Heaton M.P."/>
            <person name="Clawson M.L."/>
            <person name="Snelling W.M."/>
            <person name="Wiedmann R.T."/>
            <person name="Van Tassell C.P."/>
            <person name="Smith T.P.L."/>
        </authorList>
    </citation>
    <scope>NUCLEOTIDE SEQUENCE [LARGE SCALE MRNA]</scope>
</reference>
<reference key="2">
    <citation type="submission" date="2006-08" db="EMBL/GenBank/DDBJ databases">
        <authorList>
            <consortium name="NIH - Mammalian Gene Collection (MGC) project"/>
        </authorList>
    </citation>
    <scope>NUCLEOTIDE SEQUENCE [LARGE SCALE MRNA]</scope>
    <source>
        <strain>Hereford</strain>
        <tissue>Thalamus</tissue>
    </source>
</reference>
<reference key="3">
    <citation type="journal article" date="1986" name="J. Biol. Chem.">
        <title>Purification and properties of the bovine liver mitochondrial dihydroorotate dehydrogenase.</title>
        <authorList>
            <person name="Hines V."/>
            <person name="Keys L.D. III"/>
            <person name="Johnston M."/>
        </authorList>
    </citation>
    <scope>FUNCTION</scope>
    <scope>CATALYTIC ACTIVITY</scope>
    <scope>SUBSTRATE SPECIFICITY</scope>
    <scope>BIOPHYSICOCHEMICAL PROPERTIES</scope>
</reference>
<reference key="4">
    <citation type="journal article" date="1987" name="J. Biol. Chem.">
        <authorList>
            <person name="Hines V."/>
            <person name="Keys L.D. III"/>
            <person name="Johnston M."/>
        </authorList>
    </citation>
    <scope>ERRATUM OF PUBMED:3733756</scope>
</reference>
<reference key="5">
    <citation type="journal article" date="1989" name="Biochemistry">
        <title>Analysis of the kinetic mechanism of the bovine liver mitochondrial dihydroorotate dehydrogenase.</title>
        <authorList>
            <person name="Hines V."/>
            <person name="Johnston M."/>
        </authorList>
    </citation>
    <scope>FUNCTION</scope>
    <scope>CATALYTIC ACTIVITY</scope>
    <scope>BIOPHYSICOCHEMICAL PROPERTIES</scope>
    <scope>ENZYME KINETICS</scope>
</reference>
<feature type="chain" id="PRO_0000233397" description="Dihydroorotate dehydrogenase (quinone), mitochondrial">
    <location>
        <begin position="1"/>
        <end position="395"/>
    </location>
</feature>
<feature type="transit peptide" description="Mitochondrion; not cleaved" evidence="1">
    <location>
        <begin position="1"/>
        <end position="10"/>
    </location>
</feature>
<feature type="topological domain" description="Mitochondrial matrix" evidence="1">
    <location>
        <begin position="1"/>
        <end position="10"/>
    </location>
</feature>
<feature type="transmembrane region" description="Helical" evidence="1">
    <location>
        <begin position="11"/>
        <end position="30"/>
    </location>
</feature>
<feature type="topological domain" description="Mitochondrial intermembrane" evidence="1">
    <location>
        <begin position="31"/>
        <end position="395"/>
    </location>
</feature>
<feature type="active site" description="Nucleophile" evidence="1">
    <location>
        <position position="214"/>
    </location>
</feature>
<feature type="binding site" evidence="1">
    <location>
        <begin position="95"/>
        <end position="99"/>
    </location>
    <ligand>
        <name>FMN</name>
        <dbReference type="ChEBI" id="CHEBI:58210"/>
    </ligand>
</feature>
<feature type="binding site" evidence="1">
    <location>
        <position position="99"/>
    </location>
    <ligand>
        <name>substrate</name>
    </ligand>
</feature>
<feature type="binding site" evidence="1">
    <location>
        <position position="119"/>
    </location>
    <ligand>
        <name>FMN</name>
        <dbReference type="ChEBI" id="CHEBI:58210"/>
    </ligand>
</feature>
<feature type="binding site" evidence="1">
    <location>
        <begin position="144"/>
        <end position="148"/>
    </location>
    <ligand>
        <name>substrate</name>
    </ligand>
</feature>
<feature type="binding site" evidence="1">
    <location>
        <position position="180"/>
    </location>
    <ligand>
        <name>FMN</name>
        <dbReference type="ChEBI" id="CHEBI:58210"/>
    </ligand>
</feature>
<feature type="binding site" evidence="1">
    <location>
        <begin position="211"/>
        <end position="216"/>
    </location>
    <ligand>
        <name>substrate</name>
    </ligand>
</feature>
<feature type="binding site" evidence="1">
    <location>
        <position position="211"/>
    </location>
    <ligand>
        <name>FMN</name>
        <dbReference type="ChEBI" id="CHEBI:58210"/>
    </ligand>
</feature>
<feature type="binding site" evidence="1">
    <location>
        <position position="254"/>
    </location>
    <ligand>
        <name>FMN</name>
        <dbReference type="ChEBI" id="CHEBI:58210"/>
    </ligand>
</feature>
<feature type="binding site" evidence="1">
    <location>
        <position position="282"/>
    </location>
    <ligand>
        <name>FMN</name>
        <dbReference type="ChEBI" id="CHEBI:58210"/>
    </ligand>
</feature>
<feature type="binding site" evidence="1">
    <location>
        <begin position="283"/>
        <end position="284"/>
    </location>
    <ligand>
        <name>substrate</name>
    </ligand>
</feature>
<feature type="binding site" evidence="1">
    <location>
        <position position="305"/>
    </location>
    <ligand>
        <name>FMN</name>
        <dbReference type="ChEBI" id="CHEBI:58210"/>
    </ligand>
</feature>
<feature type="binding site" evidence="1">
    <location>
        <position position="334"/>
    </location>
    <ligand>
        <name>FMN</name>
        <dbReference type="ChEBI" id="CHEBI:58210"/>
    </ligand>
</feature>
<feature type="binding site" evidence="1">
    <location>
        <begin position="355"/>
        <end position="356"/>
    </location>
    <ligand>
        <name>FMN</name>
        <dbReference type="ChEBI" id="CHEBI:58210"/>
    </ligand>
</feature>
<keyword id="KW-0285">Flavoprotein</keyword>
<keyword id="KW-0288">FMN</keyword>
<keyword id="KW-0472">Membrane</keyword>
<keyword id="KW-0496">Mitochondrion</keyword>
<keyword id="KW-0999">Mitochondrion inner membrane</keyword>
<keyword id="KW-0560">Oxidoreductase</keyword>
<keyword id="KW-0665">Pyrimidine biosynthesis</keyword>
<keyword id="KW-1185">Reference proteome</keyword>
<keyword id="KW-0809">Transit peptide</keyword>
<keyword id="KW-0812">Transmembrane</keyword>
<keyword id="KW-1133">Transmembrane helix</keyword>